<organism>
    <name type="scientific">Mus musculus</name>
    <name type="common">Mouse</name>
    <dbReference type="NCBI Taxonomy" id="10090"/>
    <lineage>
        <taxon>Eukaryota</taxon>
        <taxon>Metazoa</taxon>
        <taxon>Chordata</taxon>
        <taxon>Craniata</taxon>
        <taxon>Vertebrata</taxon>
        <taxon>Euteleostomi</taxon>
        <taxon>Mammalia</taxon>
        <taxon>Eutheria</taxon>
        <taxon>Euarchontoglires</taxon>
        <taxon>Glires</taxon>
        <taxon>Rodentia</taxon>
        <taxon>Myomorpha</taxon>
        <taxon>Muroidea</taxon>
        <taxon>Muridae</taxon>
        <taxon>Murinae</taxon>
        <taxon>Mus</taxon>
        <taxon>Mus</taxon>
    </lineage>
</organism>
<feature type="transit peptide" description="Mitochondrion" evidence="3">
    <location>
        <begin position="1"/>
        <end position="41"/>
    </location>
</feature>
<feature type="chain" id="PRO_0000010323" description="Fumarate hydratase, mitochondrial">
    <location>
        <begin position="42"/>
        <end position="507"/>
    </location>
</feature>
<feature type="active site" description="Proton donor/acceptor" evidence="1">
    <location>
        <position position="232"/>
    </location>
</feature>
<feature type="active site" evidence="4">
    <location>
        <position position="362"/>
    </location>
</feature>
<feature type="binding site" evidence="1">
    <location>
        <begin position="142"/>
        <end position="144"/>
    </location>
    <ligand>
        <name>substrate</name>
    </ligand>
</feature>
<feature type="binding site" description="in site B" evidence="1">
    <location>
        <begin position="173"/>
        <end position="176"/>
    </location>
    <ligand>
        <name>substrate</name>
    </ligand>
</feature>
<feature type="binding site" evidence="1">
    <location>
        <begin position="183"/>
        <end position="185"/>
    </location>
    <ligand>
        <name>substrate</name>
    </ligand>
</feature>
<feature type="binding site" evidence="4">
    <location>
        <position position="231"/>
    </location>
    <ligand>
        <name>substrate</name>
    </ligand>
</feature>
<feature type="binding site" evidence="4">
    <location>
        <position position="363"/>
    </location>
    <ligand>
        <name>substrate</name>
    </ligand>
</feature>
<feature type="binding site" evidence="4">
    <location>
        <begin position="368"/>
        <end position="370"/>
    </location>
    <ligand>
        <name>substrate</name>
    </ligand>
</feature>
<feature type="site" description="Important for catalytic activity" evidence="1">
    <location>
        <position position="375"/>
    </location>
</feature>
<feature type="modified residue" description="N6-acetyllysine; alternate" evidence="14">
    <location>
        <position position="58"/>
    </location>
</feature>
<feature type="modified residue" description="N6-succinyllysine; alternate" evidence="15">
    <location>
        <position position="58"/>
    </location>
</feature>
<feature type="modified residue" description="N6-acetyllysine; alternate" evidence="14 15">
    <location>
        <position position="63"/>
    </location>
</feature>
<feature type="modified residue" description="N6-succinyllysine; alternate" evidence="15">
    <location>
        <position position="63"/>
    </location>
</feature>
<feature type="modified residue" description="N6-acetyllysine; alternate" evidence="14">
    <location>
        <position position="77"/>
    </location>
</feature>
<feature type="modified residue" description="N6-succinyllysine; alternate" evidence="15">
    <location>
        <position position="77"/>
    </location>
</feature>
<feature type="modified residue" description="Phosphothreonine" evidence="13">
    <location>
        <position position="82"/>
    </location>
</feature>
<feature type="modified residue" description="N6-acetyllysine; alternate" evidence="14">
    <location>
        <position position="112"/>
    </location>
</feature>
<feature type="modified residue" description="N6-succinyllysine; alternate" evidence="15">
    <location>
        <position position="112"/>
    </location>
</feature>
<feature type="modified residue" description="N6-acetyllysine; alternate" evidence="14">
    <location>
        <position position="119"/>
    </location>
</feature>
<feature type="modified residue" description="N6-succinyllysine; alternate" evidence="15">
    <location>
        <position position="119"/>
    </location>
</feature>
<feature type="modified residue" description="N6-acetyllysine" evidence="14">
    <location>
        <position position="210"/>
    </location>
</feature>
<feature type="modified residue" description="N6-acetyllysine; alternate" evidence="14">
    <location>
        <position position="220"/>
    </location>
</feature>
<feature type="modified residue" description="N6-succinyllysine; alternate" evidence="15">
    <location>
        <position position="220"/>
    </location>
</feature>
<feature type="modified residue" description="Phosphothreonine" evidence="2">
    <location>
        <position position="233"/>
    </location>
</feature>
<feature type="modified residue" description="N6-acetyllysine; alternate" evidence="14">
    <location>
        <position position="289"/>
    </location>
</feature>
<feature type="modified residue" description="N6-succinyllysine; alternate" evidence="15">
    <location>
        <position position="289"/>
    </location>
</feature>
<feature type="modified residue" description="Phosphoserine" evidence="13">
    <location>
        <position position="363"/>
    </location>
</feature>
<feature type="modified residue" description="N6-succinyllysine" evidence="15">
    <location>
        <position position="464"/>
    </location>
</feature>
<feature type="modified residue" description="N6-succinyllysine" evidence="15">
    <location>
        <position position="470"/>
    </location>
</feature>
<feature type="modified residue" description="N6-acetyllysine" evidence="14">
    <location>
        <position position="499"/>
    </location>
</feature>
<feature type="splice variant" id="VSP_018967" description="In isoform Cytoplasmic." evidence="10">
    <location>
        <begin position="1"/>
        <end position="40"/>
    </location>
</feature>
<feature type="sequence conflict" description="In Ref. 1; AK002379." evidence="10" ref="1">
    <original>S</original>
    <variation>N</variation>
    <location>
        <position position="183"/>
    </location>
</feature>
<feature type="sequence conflict" description="In Ref. 1; AK002379." evidence="10" ref="1">
    <original>A</original>
    <variation>T</variation>
    <location>
        <position position="236"/>
    </location>
</feature>
<feature type="initiator methionine" description="Removed" evidence="2">
    <location sequence="P97807-2">
        <position position="1"/>
    </location>
</feature>
<evidence type="ECO:0000250" key="1">
    <source>
        <dbReference type="UniProtKB" id="P05042"/>
    </source>
</evidence>
<evidence type="ECO:0000250" key="2">
    <source>
        <dbReference type="UniProtKB" id="P07954"/>
    </source>
</evidence>
<evidence type="ECO:0000250" key="3">
    <source>
        <dbReference type="UniProtKB" id="P10173"/>
    </source>
</evidence>
<evidence type="ECO:0000250" key="4">
    <source>
        <dbReference type="UniProtKB" id="P9WN93"/>
    </source>
</evidence>
<evidence type="ECO:0000269" key="5">
    <source>
    </source>
</evidence>
<evidence type="ECO:0000269" key="6">
    <source>
    </source>
</evidence>
<evidence type="ECO:0000269" key="7">
    <source>
    </source>
</evidence>
<evidence type="ECO:0000303" key="8">
    <source>
    </source>
</evidence>
<evidence type="ECO:0000303" key="9">
    <source>
    </source>
</evidence>
<evidence type="ECO:0000305" key="10"/>
<evidence type="ECO:0000305" key="11">
    <source>
    </source>
</evidence>
<evidence type="ECO:0000312" key="12">
    <source>
        <dbReference type="MGI" id="MGI:95530"/>
    </source>
</evidence>
<evidence type="ECO:0007744" key="13">
    <source>
    </source>
</evidence>
<evidence type="ECO:0007744" key="14">
    <source>
    </source>
</evidence>
<evidence type="ECO:0007744" key="15">
    <source>
    </source>
</evidence>
<sequence>MYRALRLLARSRRLLRVPSAGAAVSGEATTLPRCAPNVARMASQNSFRVEFDTFGELKVPTDKYYGAQTVRSTMNFKIGGATERMPIPVIQAFGILKRAAAEVNQEYGLDPKIASAIMKAADEVAEGKLNDHFPLVVWQTGSGTQTNMNVNEVISNRAIEMLGGELGSKKPVHPNDHVNKSQSSNDTFPTAMHIAAAVEVHKVLLPGLQKLHDALSAKSKEFAQVIKIGRTHTQDAVPLTLGQEFSGYVQQVQYAMVRIKAAMPRIYELAAGGTAVGTGLNTRIGFAEKVAAKVAALTGLPFVTAPNKFEALAAHDALVELSGAMNTAACSLMKIANDIRFLGSGPRSGLGELILPENEPGSSIMPGKVNPTQCEAMTMVAAQVMGNHVAVTVGGSNGHFELNVFKPMMIKNVLHSARLLGDASVSFTDNCVVGIQANTERINKLMNESLMLVTALNPHIGYDKAAKIAKTAHKNGSTLKETAIELGYLTAEQFDEWVKPKDMLGPK</sequence>
<proteinExistence type="evidence at protein level"/>
<reference key="1">
    <citation type="journal article" date="2005" name="Science">
        <title>The transcriptional landscape of the mammalian genome.</title>
        <authorList>
            <person name="Carninci P."/>
            <person name="Kasukawa T."/>
            <person name="Katayama S."/>
            <person name="Gough J."/>
            <person name="Frith M.C."/>
            <person name="Maeda N."/>
            <person name="Oyama R."/>
            <person name="Ravasi T."/>
            <person name="Lenhard B."/>
            <person name="Wells C."/>
            <person name="Kodzius R."/>
            <person name="Shimokawa K."/>
            <person name="Bajic V.B."/>
            <person name="Brenner S.E."/>
            <person name="Batalov S."/>
            <person name="Forrest A.R."/>
            <person name="Zavolan M."/>
            <person name="Davis M.J."/>
            <person name="Wilming L.G."/>
            <person name="Aidinis V."/>
            <person name="Allen J.E."/>
            <person name="Ambesi-Impiombato A."/>
            <person name="Apweiler R."/>
            <person name="Aturaliya R.N."/>
            <person name="Bailey T.L."/>
            <person name="Bansal M."/>
            <person name="Baxter L."/>
            <person name="Beisel K.W."/>
            <person name="Bersano T."/>
            <person name="Bono H."/>
            <person name="Chalk A.M."/>
            <person name="Chiu K.P."/>
            <person name="Choudhary V."/>
            <person name="Christoffels A."/>
            <person name="Clutterbuck D.R."/>
            <person name="Crowe M.L."/>
            <person name="Dalla E."/>
            <person name="Dalrymple B.P."/>
            <person name="de Bono B."/>
            <person name="Della Gatta G."/>
            <person name="di Bernardo D."/>
            <person name="Down T."/>
            <person name="Engstrom P."/>
            <person name="Fagiolini M."/>
            <person name="Faulkner G."/>
            <person name="Fletcher C.F."/>
            <person name="Fukushima T."/>
            <person name="Furuno M."/>
            <person name="Futaki S."/>
            <person name="Gariboldi M."/>
            <person name="Georgii-Hemming P."/>
            <person name="Gingeras T.R."/>
            <person name="Gojobori T."/>
            <person name="Green R.E."/>
            <person name="Gustincich S."/>
            <person name="Harbers M."/>
            <person name="Hayashi Y."/>
            <person name="Hensch T.K."/>
            <person name="Hirokawa N."/>
            <person name="Hill D."/>
            <person name="Huminiecki L."/>
            <person name="Iacono M."/>
            <person name="Ikeo K."/>
            <person name="Iwama A."/>
            <person name="Ishikawa T."/>
            <person name="Jakt M."/>
            <person name="Kanapin A."/>
            <person name="Katoh M."/>
            <person name="Kawasawa Y."/>
            <person name="Kelso J."/>
            <person name="Kitamura H."/>
            <person name="Kitano H."/>
            <person name="Kollias G."/>
            <person name="Krishnan S.P."/>
            <person name="Kruger A."/>
            <person name="Kummerfeld S.K."/>
            <person name="Kurochkin I.V."/>
            <person name="Lareau L.F."/>
            <person name="Lazarevic D."/>
            <person name="Lipovich L."/>
            <person name="Liu J."/>
            <person name="Liuni S."/>
            <person name="McWilliam S."/>
            <person name="Madan Babu M."/>
            <person name="Madera M."/>
            <person name="Marchionni L."/>
            <person name="Matsuda H."/>
            <person name="Matsuzawa S."/>
            <person name="Miki H."/>
            <person name="Mignone F."/>
            <person name="Miyake S."/>
            <person name="Morris K."/>
            <person name="Mottagui-Tabar S."/>
            <person name="Mulder N."/>
            <person name="Nakano N."/>
            <person name="Nakauchi H."/>
            <person name="Ng P."/>
            <person name="Nilsson R."/>
            <person name="Nishiguchi S."/>
            <person name="Nishikawa S."/>
            <person name="Nori F."/>
            <person name="Ohara O."/>
            <person name="Okazaki Y."/>
            <person name="Orlando V."/>
            <person name="Pang K.C."/>
            <person name="Pavan W.J."/>
            <person name="Pavesi G."/>
            <person name="Pesole G."/>
            <person name="Petrovsky N."/>
            <person name="Piazza S."/>
            <person name="Reed J."/>
            <person name="Reid J.F."/>
            <person name="Ring B.Z."/>
            <person name="Ringwald M."/>
            <person name="Rost B."/>
            <person name="Ruan Y."/>
            <person name="Salzberg S.L."/>
            <person name="Sandelin A."/>
            <person name="Schneider C."/>
            <person name="Schoenbach C."/>
            <person name="Sekiguchi K."/>
            <person name="Semple C.A."/>
            <person name="Seno S."/>
            <person name="Sessa L."/>
            <person name="Sheng Y."/>
            <person name="Shibata Y."/>
            <person name="Shimada H."/>
            <person name="Shimada K."/>
            <person name="Silva D."/>
            <person name="Sinclair B."/>
            <person name="Sperling S."/>
            <person name="Stupka E."/>
            <person name="Sugiura K."/>
            <person name="Sultana R."/>
            <person name="Takenaka Y."/>
            <person name="Taki K."/>
            <person name="Tammoja K."/>
            <person name="Tan S.L."/>
            <person name="Tang S."/>
            <person name="Taylor M.S."/>
            <person name="Tegner J."/>
            <person name="Teichmann S.A."/>
            <person name="Ueda H.R."/>
            <person name="van Nimwegen E."/>
            <person name="Verardo R."/>
            <person name="Wei C.L."/>
            <person name="Yagi K."/>
            <person name="Yamanishi H."/>
            <person name="Zabarovsky E."/>
            <person name="Zhu S."/>
            <person name="Zimmer A."/>
            <person name="Hide W."/>
            <person name="Bult C."/>
            <person name="Grimmond S.M."/>
            <person name="Teasdale R.D."/>
            <person name="Liu E.T."/>
            <person name="Brusic V."/>
            <person name="Quackenbush J."/>
            <person name="Wahlestedt C."/>
            <person name="Mattick J.S."/>
            <person name="Hume D.A."/>
            <person name="Kai C."/>
            <person name="Sasaki D."/>
            <person name="Tomaru Y."/>
            <person name="Fukuda S."/>
            <person name="Kanamori-Katayama M."/>
            <person name="Suzuki M."/>
            <person name="Aoki J."/>
            <person name="Arakawa T."/>
            <person name="Iida J."/>
            <person name="Imamura K."/>
            <person name="Itoh M."/>
            <person name="Kato T."/>
            <person name="Kawaji H."/>
            <person name="Kawagashira N."/>
            <person name="Kawashima T."/>
            <person name="Kojima M."/>
            <person name="Kondo S."/>
            <person name="Konno H."/>
            <person name="Nakano K."/>
            <person name="Ninomiya N."/>
            <person name="Nishio T."/>
            <person name="Okada M."/>
            <person name="Plessy C."/>
            <person name="Shibata K."/>
            <person name="Shiraki T."/>
            <person name="Suzuki S."/>
            <person name="Tagami M."/>
            <person name="Waki K."/>
            <person name="Watahiki A."/>
            <person name="Okamura-Oho Y."/>
            <person name="Suzuki H."/>
            <person name="Kawai J."/>
            <person name="Hayashizaki Y."/>
        </authorList>
    </citation>
    <scope>NUCLEOTIDE SEQUENCE [LARGE SCALE MRNA]</scope>
    <source>
        <strain>C57BL/6J</strain>
        <tissue>Heart</tissue>
        <tissue>Kidney</tissue>
    </source>
</reference>
<reference key="2">
    <citation type="submission" date="2005-07" db="EMBL/GenBank/DDBJ databases">
        <authorList>
            <person name="Mural R.J."/>
            <person name="Adams M.D."/>
            <person name="Myers E.W."/>
            <person name="Smith H.O."/>
            <person name="Venter J.C."/>
        </authorList>
    </citation>
    <scope>NUCLEOTIDE SEQUENCE [LARGE SCALE GENOMIC DNA]</scope>
</reference>
<reference key="3">
    <citation type="journal article" date="2004" name="Genome Res.">
        <title>The status, quality, and expansion of the NIH full-length cDNA project: the Mammalian Gene Collection (MGC).</title>
        <authorList>
            <consortium name="The MGC Project Team"/>
        </authorList>
    </citation>
    <scope>NUCLEOTIDE SEQUENCE [LARGE SCALE MRNA]</scope>
</reference>
<reference key="4">
    <citation type="journal article" date="1997" name="Mol. Cell. Biol.">
        <title>E2a-Pbx1 induces aberrant expression of tissue-specific and developmentally regulated genes when expressed in NIH 3T3 fibroblasts.</title>
        <authorList>
            <person name="Fu X."/>
            <person name="Kamps M.P."/>
        </authorList>
    </citation>
    <scope>NUCLEOTIDE SEQUENCE [MRNA] OF 178-282</scope>
</reference>
<reference key="5">
    <citation type="submission" date="2007-07" db="UniProtKB">
        <authorList>
            <person name="Lubec G."/>
            <person name="Kang S.U."/>
            <person name="Klug S."/>
            <person name="Yang J.W."/>
            <person name="Zigmond M."/>
        </authorList>
    </citation>
    <scope>PROTEIN SEQUENCE OF 49-71; 85-97; 99-112; 129-157; 181-210; 231-258; 266-283; 294-308; 348-368; 419-441; 445-464 AND 481-501</scope>
    <scope>IDENTIFICATION BY MASS SPECTROMETRY</scope>
    <source>
        <strain>C57BL/6J</strain>
        <tissue>Brain</tissue>
        <tissue>Hippocampus</tissue>
    </source>
</reference>
<reference key="6">
    <citation type="journal article" date="2010" name="Cell">
        <title>A tissue-specific atlas of mouse protein phosphorylation and expression.</title>
        <authorList>
            <person name="Huttlin E.L."/>
            <person name="Jedrychowski M.P."/>
            <person name="Elias J.E."/>
            <person name="Goswami T."/>
            <person name="Rad R."/>
            <person name="Beausoleil S.A."/>
            <person name="Villen J."/>
            <person name="Haas W."/>
            <person name="Sowa M.E."/>
            <person name="Gygi S.P."/>
        </authorList>
    </citation>
    <scope>PHOSPHORYLATION [LARGE SCALE ANALYSIS] AT THR-82 AND SER-363</scope>
    <scope>IDENTIFICATION BY MASS SPECTROMETRY [LARGE SCALE ANALYSIS]</scope>
    <source>
        <tissue>Brain</tissue>
        <tissue>Brown adipose tissue</tissue>
        <tissue>Heart</tissue>
        <tissue>Kidney</tissue>
        <tissue>Liver</tissue>
        <tissue>Lung</tissue>
        <tissue>Pancreas</tissue>
        <tissue>Spleen</tissue>
        <tissue>Testis</tissue>
    </source>
</reference>
<reference key="7">
    <citation type="journal article" date="2013" name="Mol. Cell">
        <title>SIRT5-mediated lysine desuccinylation impacts diverse metabolic pathways.</title>
        <authorList>
            <person name="Park J."/>
            <person name="Chen Y."/>
            <person name="Tishkoff D.X."/>
            <person name="Peng C."/>
            <person name="Tan M."/>
            <person name="Dai L."/>
            <person name="Xie Z."/>
            <person name="Zhang Y."/>
            <person name="Zwaans B.M."/>
            <person name="Skinner M.E."/>
            <person name="Lombard D.B."/>
            <person name="Zhao Y."/>
        </authorList>
    </citation>
    <scope>ACETYLATION [LARGE SCALE ANALYSIS] AT LYS-63</scope>
    <scope>SUCCINYLATION [LARGE SCALE ANALYSIS] AT LYS-58; LYS-63; LYS-77; LYS-112; LYS-119; LYS-220; LYS-289; LYS-464 AND LYS-470</scope>
    <scope>IDENTIFICATION BY MASS SPECTROMETRY [LARGE SCALE ANALYSIS]</scope>
    <source>
        <tissue>Embryonic fibroblast</tissue>
        <tissue>Liver</tissue>
    </source>
</reference>
<reference key="8">
    <citation type="journal article" date="2013" name="Proc. Natl. Acad. Sci. U.S.A.">
        <title>Label-free quantitative proteomics of the lysine acetylome in mitochondria identifies substrates of SIRT3 in metabolic pathways.</title>
        <authorList>
            <person name="Rardin M.J."/>
            <person name="Newman J.C."/>
            <person name="Held J.M."/>
            <person name="Cusack M.P."/>
            <person name="Sorensen D.J."/>
            <person name="Li B."/>
            <person name="Schilling B."/>
            <person name="Mooney S.D."/>
            <person name="Kahn C.R."/>
            <person name="Verdin E."/>
            <person name="Gibson B.W."/>
        </authorList>
    </citation>
    <scope>ACETYLATION [LARGE SCALE ANALYSIS] AT LYS-58; LYS-63; LYS-77; LYS-112; LYS-119; LYS-210; LYS-220; LYS-289 AND LYS-499</scope>
    <scope>IDENTIFICATION BY MASS SPECTROMETRY [LARGE SCALE ANALYSIS]</scope>
    <source>
        <tissue>Liver</tissue>
    </source>
</reference>
<reference key="9">
    <citation type="journal article" date="2007" name="Cancer Cell">
        <title>Targeted inactivation of fh1 causes proliferative renal cyst development and activation of the hypoxia pathway.</title>
        <authorList>
            <person name="Pollard P.J."/>
            <person name="Spencer-Dene B."/>
            <person name="Shukla D."/>
            <person name="Howarth K."/>
            <person name="Nye E."/>
            <person name="El-Bahrawy M."/>
            <person name="Deheragoda M."/>
            <person name="Joannou M."/>
            <person name="McDonald S."/>
            <person name="Martin A."/>
            <person name="Igarashi P."/>
            <person name="Varsani-Brown S."/>
            <person name="Rosewell I."/>
            <person name="Poulsom R."/>
            <person name="Maxwell P."/>
            <person name="Stamp G.W."/>
            <person name="Tomlinson I.P."/>
        </authorList>
    </citation>
    <scope>DISRUPTION PHENOTYPE</scope>
</reference>
<reference key="10">
    <citation type="journal article" date="2011" name="Cancer Cell">
        <title>Renal cyst formation in Fh1-deficient mice is independent of the Hif/Phd pathway: roles for fumarate in KEAP1 succination and Nrf2 signaling.</title>
        <authorList>
            <person name="Adam J."/>
            <person name="Hatipoglu E."/>
            <person name="O'Flaherty L."/>
            <person name="Ternette N."/>
            <person name="Sahgal N."/>
            <person name="Lockstone H."/>
            <person name="Baban D."/>
            <person name="Nye E."/>
            <person name="Stamp G.W."/>
            <person name="Wolhuter K."/>
            <person name="Stevens M."/>
            <person name="Fischer R."/>
            <person name="Carmeliet P."/>
            <person name="Maxwell P.H."/>
            <person name="Pugh C.W."/>
            <person name="Frizzell N."/>
            <person name="Soga T."/>
            <person name="Kessler B.M."/>
            <person name="El-Bahrawy M."/>
            <person name="Ratcliffe P.J."/>
            <person name="Pollard P.J."/>
        </authorList>
    </citation>
    <scope>DISRUPTION PHENOTYPE</scope>
</reference>
<reference key="11">
    <citation type="journal article" date="2013" name="Cell Rep.">
        <title>A role for cytosolic fumarate hydratase in urea cycle metabolism and renal neoplasia.</title>
        <authorList>
            <person name="Adam J."/>
            <person name="Yang M."/>
            <person name="Bauerschmidt C."/>
            <person name="Kitagawa M."/>
            <person name="O'Flaherty L."/>
            <person name="Maheswaran P."/>
            <person name="Oezkan G."/>
            <person name="Sahgal N."/>
            <person name="Baban D."/>
            <person name="Kato K."/>
            <person name="Saito K."/>
            <person name="Iino K."/>
            <person name="Igarashi K."/>
            <person name="Stratford M."/>
            <person name="Pugh C."/>
            <person name="Tennant D.A."/>
            <person name="Ludwig C."/>
            <person name="Davies B."/>
            <person name="Ratcliffe P.J."/>
            <person name="El-Bahrawy M."/>
            <person name="Ashrafian H."/>
            <person name="Soga T."/>
            <person name="Pollard P.J."/>
        </authorList>
    </citation>
    <scope>FUNCTION</scope>
    <scope>CATALYTIC ACTIVITY</scope>
</reference>
<name>FUMH_MOUSE</name>
<accession>P97807</accession>
<accession>Q3UIA9</accession>
<accession>Q99JL0</accession>
<accession>Q9DCX0</accession>
<protein>
    <recommendedName>
        <fullName evidence="8">Fumarate hydratase, mitochondrial</fullName>
        <shortName evidence="9">Fumarase</shortName>
        <ecNumber evidence="11">4.2.1.2</ecNumber>
    </recommendedName>
    <alternativeName>
        <fullName>EF-3</fullName>
    </alternativeName>
</protein>
<dbReference type="EC" id="4.2.1.2" evidence="11"/>
<dbReference type="EMBL" id="AK002379">
    <property type="status" value="NOT_ANNOTATED_CDS"/>
    <property type="molecule type" value="mRNA"/>
</dbReference>
<dbReference type="EMBL" id="AK147000">
    <property type="protein sequence ID" value="BAE27597.1"/>
    <property type="molecule type" value="mRNA"/>
</dbReference>
<dbReference type="EMBL" id="CH466555">
    <property type="protein sequence ID" value="EDL13210.1"/>
    <property type="molecule type" value="Genomic_DNA"/>
</dbReference>
<dbReference type="EMBL" id="BC006048">
    <property type="protein sequence ID" value="AAH06048.1"/>
    <property type="molecule type" value="mRNA"/>
</dbReference>
<dbReference type="EMBL" id="U72679">
    <property type="protein sequence ID" value="AAB51039.1"/>
    <property type="molecule type" value="mRNA"/>
</dbReference>
<dbReference type="CCDS" id="CCDS15547.1">
    <molecule id="P97807-1"/>
</dbReference>
<dbReference type="RefSeq" id="NP_034339.2">
    <molecule id="P97807-1"/>
    <property type="nucleotide sequence ID" value="NM_010209.2"/>
</dbReference>
<dbReference type="SMR" id="P97807"/>
<dbReference type="BioGRID" id="199665">
    <property type="interactions" value="37"/>
</dbReference>
<dbReference type="FunCoup" id="P97807">
    <property type="interactions" value="2133"/>
</dbReference>
<dbReference type="IntAct" id="P97807">
    <property type="interactions" value="4"/>
</dbReference>
<dbReference type="MINT" id="P97807"/>
<dbReference type="STRING" id="10090.ENSMUSP00000027810"/>
<dbReference type="GlyGen" id="P97807">
    <property type="glycosylation" value="2 sites, 1 O-linked glycan (1 site)"/>
</dbReference>
<dbReference type="iPTMnet" id="P97807"/>
<dbReference type="MetOSite" id="P97807"/>
<dbReference type="PhosphoSitePlus" id="P97807"/>
<dbReference type="SwissPalm" id="P97807"/>
<dbReference type="REPRODUCTION-2DPAGE" id="IPI00759940"/>
<dbReference type="REPRODUCTION-2DPAGE" id="P97807"/>
<dbReference type="CPTAC" id="non-CPTAC-3579"/>
<dbReference type="jPOST" id="P97807"/>
<dbReference type="PaxDb" id="10090-ENSMUSP00000027810"/>
<dbReference type="PeptideAtlas" id="P97807"/>
<dbReference type="ProteomicsDB" id="271643">
    <molecule id="P97807-1"/>
</dbReference>
<dbReference type="ProteomicsDB" id="271644">
    <molecule id="P97807-2"/>
</dbReference>
<dbReference type="Pumba" id="P97807"/>
<dbReference type="Antibodypedia" id="34701">
    <property type="antibodies" value="675 antibodies from 41 providers"/>
</dbReference>
<dbReference type="Ensembl" id="ENSMUST00000027810.14">
    <molecule id="P97807-1"/>
    <property type="protein sequence ID" value="ENSMUSP00000027810.8"/>
    <property type="gene ID" value="ENSMUSG00000026526.15"/>
</dbReference>
<dbReference type="GeneID" id="14194"/>
<dbReference type="KEGG" id="mmu:14194"/>
<dbReference type="UCSC" id="uc007dtn.2">
    <molecule id="P97807-1"/>
    <property type="organism name" value="mouse"/>
</dbReference>
<dbReference type="AGR" id="MGI:95530"/>
<dbReference type="CTD" id="14194"/>
<dbReference type="MGI" id="MGI:95530">
    <property type="gene designation" value="Fh1"/>
</dbReference>
<dbReference type="VEuPathDB" id="HostDB:ENSMUSG00000026526"/>
<dbReference type="eggNOG" id="KOG1317">
    <property type="taxonomic scope" value="Eukaryota"/>
</dbReference>
<dbReference type="GeneTree" id="ENSGT00950000183122"/>
<dbReference type="HOGENOM" id="CLU_021594_4_1_1"/>
<dbReference type="InParanoid" id="P97807"/>
<dbReference type="OMA" id="AKWRAQT"/>
<dbReference type="OrthoDB" id="1738025at2759"/>
<dbReference type="PhylomeDB" id="P97807"/>
<dbReference type="TreeFam" id="TF300441"/>
<dbReference type="Reactome" id="R-MMU-71403">
    <property type="pathway name" value="Citric acid cycle (TCA cycle)"/>
</dbReference>
<dbReference type="Reactome" id="R-MMU-9837999">
    <property type="pathway name" value="Mitochondrial protein degradation"/>
</dbReference>
<dbReference type="UniPathway" id="UPA00223">
    <property type="reaction ID" value="UER01007"/>
</dbReference>
<dbReference type="BioGRID-ORCS" id="14194">
    <property type="hits" value="23 hits in 82 CRISPR screens"/>
</dbReference>
<dbReference type="ChiTaRS" id="Fh1">
    <property type="organism name" value="mouse"/>
</dbReference>
<dbReference type="PRO" id="PR:P97807"/>
<dbReference type="Proteomes" id="UP000000589">
    <property type="component" value="Chromosome 1"/>
</dbReference>
<dbReference type="RNAct" id="P97807">
    <property type="molecule type" value="protein"/>
</dbReference>
<dbReference type="Bgee" id="ENSMUSG00000026526">
    <property type="expression patterns" value="Expressed in atrioventricular valve and 277 other cell types or tissues"/>
</dbReference>
<dbReference type="ExpressionAtlas" id="P97807">
    <property type="expression patterns" value="baseline and differential"/>
</dbReference>
<dbReference type="GO" id="GO:0005694">
    <property type="term" value="C:chromosome"/>
    <property type="evidence" value="ECO:0007669"/>
    <property type="project" value="UniProtKB-SubCell"/>
</dbReference>
<dbReference type="GO" id="GO:0005829">
    <property type="term" value="C:cytosol"/>
    <property type="evidence" value="ECO:0007669"/>
    <property type="project" value="UniProtKB-SubCell"/>
</dbReference>
<dbReference type="GO" id="GO:0005739">
    <property type="term" value="C:mitochondrion"/>
    <property type="evidence" value="ECO:0007005"/>
    <property type="project" value="MGI"/>
</dbReference>
<dbReference type="GO" id="GO:0005634">
    <property type="term" value="C:nucleus"/>
    <property type="evidence" value="ECO:0007669"/>
    <property type="project" value="UniProtKB-SubCell"/>
</dbReference>
<dbReference type="GO" id="GO:0004333">
    <property type="term" value="F:fumarate hydratase activity"/>
    <property type="evidence" value="ECO:0000315"/>
    <property type="project" value="UniProtKB"/>
</dbReference>
<dbReference type="GO" id="GO:0006525">
    <property type="term" value="P:arginine metabolic process"/>
    <property type="evidence" value="ECO:0000315"/>
    <property type="project" value="UniProtKB"/>
</dbReference>
<dbReference type="GO" id="GO:0006974">
    <property type="term" value="P:DNA damage response"/>
    <property type="evidence" value="ECO:0000250"/>
    <property type="project" value="UniProtKB"/>
</dbReference>
<dbReference type="GO" id="GO:0006281">
    <property type="term" value="P:DNA repair"/>
    <property type="evidence" value="ECO:0007669"/>
    <property type="project" value="UniProtKB-KW"/>
</dbReference>
<dbReference type="GO" id="GO:0006106">
    <property type="term" value="P:fumarate metabolic process"/>
    <property type="evidence" value="ECO:0000315"/>
    <property type="project" value="UniProtKB"/>
</dbReference>
<dbReference type="GO" id="GO:0048873">
    <property type="term" value="P:homeostasis of number of cells within a tissue"/>
    <property type="evidence" value="ECO:0000315"/>
    <property type="project" value="MGI"/>
</dbReference>
<dbReference type="GO" id="GO:0006108">
    <property type="term" value="P:malate metabolic process"/>
    <property type="evidence" value="ECO:0000250"/>
    <property type="project" value="UniProtKB"/>
</dbReference>
<dbReference type="GO" id="GO:0120162">
    <property type="term" value="P:positive regulation of cold-induced thermogenesis"/>
    <property type="evidence" value="ECO:0000315"/>
    <property type="project" value="YuBioLab"/>
</dbReference>
<dbReference type="GO" id="GO:2001034">
    <property type="term" value="P:positive regulation of double-strand break repair via nonhomologous end joining"/>
    <property type="evidence" value="ECO:0000250"/>
    <property type="project" value="UniProtKB"/>
</dbReference>
<dbReference type="GO" id="GO:0000821">
    <property type="term" value="P:regulation of arginine metabolic process"/>
    <property type="evidence" value="ECO:0000315"/>
    <property type="project" value="UniProtKB"/>
</dbReference>
<dbReference type="GO" id="GO:0006099">
    <property type="term" value="P:tricarboxylic acid cycle"/>
    <property type="evidence" value="ECO:0007669"/>
    <property type="project" value="UniProtKB-UniPathway"/>
</dbReference>
<dbReference type="GO" id="GO:0000050">
    <property type="term" value="P:urea cycle"/>
    <property type="evidence" value="ECO:0000315"/>
    <property type="project" value="UniProtKB"/>
</dbReference>
<dbReference type="CDD" id="cd01362">
    <property type="entry name" value="Fumarase_classII"/>
    <property type="match status" value="1"/>
</dbReference>
<dbReference type="FunFam" id="1.10.40.30:FF:000002">
    <property type="entry name" value="Fumarate hydratase class II"/>
    <property type="match status" value="1"/>
</dbReference>
<dbReference type="FunFam" id="1.10.275.10:FF:000001">
    <property type="entry name" value="Fumarate hydratase, mitochondrial"/>
    <property type="match status" value="1"/>
</dbReference>
<dbReference type="FunFam" id="1.20.200.10:FF:000001">
    <property type="entry name" value="Fumarate hydratase, mitochondrial"/>
    <property type="match status" value="1"/>
</dbReference>
<dbReference type="Gene3D" id="1.10.40.30">
    <property type="entry name" value="Fumarase/aspartase (C-terminal domain)"/>
    <property type="match status" value="1"/>
</dbReference>
<dbReference type="Gene3D" id="1.20.200.10">
    <property type="entry name" value="Fumarase/aspartase (Central domain)"/>
    <property type="match status" value="1"/>
</dbReference>
<dbReference type="Gene3D" id="1.10.275.10">
    <property type="entry name" value="Fumarase/aspartase (N-terminal domain)"/>
    <property type="match status" value="1"/>
</dbReference>
<dbReference type="HAMAP" id="MF_00743">
    <property type="entry name" value="FumaraseC"/>
    <property type="match status" value="1"/>
</dbReference>
<dbReference type="InterPro" id="IPR005677">
    <property type="entry name" value="Fum_hydII"/>
</dbReference>
<dbReference type="InterPro" id="IPR024083">
    <property type="entry name" value="Fumarase/histidase_N"/>
</dbReference>
<dbReference type="InterPro" id="IPR018951">
    <property type="entry name" value="Fumarase_C_C"/>
</dbReference>
<dbReference type="InterPro" id="IPR020557">
    <property type="entry name" value="Fumarate_lyase_CS"/>
</dbReference>
<dbReference type="InterPro" id="IPR000362">
    <property type="entry name" value="Fumarate_lyase_fam"/>
</dbReference>
<dbReference type="InterPro" id="IPR022761">
    <property type="entry name" value="Fumarate_lyase_N"/>
</dbReference>
<dbReference type="InterPro" id="IPR008948">
    <property type="entry name" value="L-Aspartase-like"/>
</dbReference>
<dbReference type="NCBIfam" id="TIGR00979">
    <property type="entry name" value="fumC_II"/>
    <property type="match status" value="1"/>
</dbReference>
<dbReference type="NCBIfam" id="NF008909">
    <property type="entry name" value="PRK12273.1"/>
    <property type="match status" value="1"/>
</dbReference>
<dbReference type="PANTHER" id="PTHR11444">
    <property type="entry name" value="ASPARTATEAMMONIA/ARGININOSUCCINATE/ADENYLOSUCCINATE LYASE"/>
    <property type="match status" value="1"/>
</dbReference>
<dbReference type="PANTHER" id="PTHR11444:SF1">
    <property type="entry name" value="FUMARATE HYDRATASE, MITOCHONDRIAL"/>
    <property type="match status" value="1"/>
</dbReference>
<dbReference type="Pfam" id="PF10415">
    <property type="entry name" value="FumaraseC_C"/>
    <property type="match status" value="1"/>
</dbReference>
<dbReference type="Pfam" id="PF00206">
    <property type="entry name" value="Lyase_1"/>
    <property type="match status" value="1"/>
</dbReference>
<dbReference type="PRINTS" id="PR00149">
    <property type="entry name" value="FUMRATELYASE"/>
</dbReference>
<dbReference type="SUPFAM" id="SSF48557">
    <property type="entry name" value="L-aspartase-like"/>
    <property type="match status" value="1"/>
</dbReference>
<dbReference type="PROSITE" id="PS00163">
    <property type="entry name" value="FUMARATE_LYASES"/>
    <property type="match status" value="1"/>
</dbReference>
<gene>
    <name evidence="8 12" type="primary">Fh</name>
    <name evidence="8" type="synonym">Fh1</name>
</gene>
<comment type="function">
    <text evidence="7 10">Catalyzes the reversible stereospecific interconversion of fumarate to L-malate (PubMed:23643539). Experiments in different species have demonstrated that specific isoforms of this protein act in defined pathways and favor one direction over the other (Probable).</text>
</comment>
<comment type="function">
    <molecule>Isoform Mitochondrial</molecule>
    <text evidence="3">Catalyzes the hydration of fumarate to L-malate in the tricarboxylic acid (TCA) cycle to facilitate a transition step in the production of energy in the form of NADH.</text>
</comment>
<comment type="function">
    <molecule>Isoform Cytoplasmic</molecule>
    <text evidence="2 7">Catalyzes the dehydration of L-malate to fumarate (PubMed:23643539). Fumarate metabolism in the cytosol plays a role during urea cycle and arginine metabolism; fumarate being a by-product of the urea cycle and amino-acid catabolism (PubMed:23643539). Also plays a role in DNA repair by promoting non-homologous end-joining (NHEJ) (By similarity). In response to DNA damage and phosphorylation by PRKDC, translocates to the nucleus and accumulates at DNA double-strand breaks (DSBs): acts by catalyzing formation of fumarate, an inhibitor of KDM2B histone demethylase activity, resulting in enhanced dimethylation of histone H3 'Lys-36' (H3K36me2) (By similarity).</text>
</comment>
<comment type="catalytic activity">
    <molecule>Isoform Mitochondrial</molecule>
    <reaction evidence="3">
        <text>(S)-malate = fumarate + H2O</text>
        <dbReference type="Rhea" id="RHEA:12460"/>
        <dbReference type="ChEBI" id="CHEBI:15377"/>
        <dbReference type="ChEBI" id="CHEBI:15589"/>
        <dbReference type="ChEBI" id="CHEBI:29806"/>
        <dbReference type="EC" id="4.2.1.2"/>
    </reaction>
    <physiologicalReaction direction="right-to-left" evidence="3">
        <dbReference type="Rhea" id="RHEA:12462"/>
    </physiologicalReaction>
</comment>
<comment type="catalytic activity">
    <molecule>Isoform Cytoplasmic</molecule>
    <reaction evidence="11">
        <text>(S)-malate = fumarate + H2O</text>
        <dbReference type="Rhea" id="RHEA:12460"/>
        <dbReference type="ChEBI" id="CHEBI:15377"/>
        <dbReference type="ChEBI" id="CHEBI:15589"/>
        <dbReference type="ChEBI" id="CHEBI:29806"/>
        <dbReference type="EC" id="4.2.1.2"/>
    </reaction>
    <physiologicalReaction direction="left-to-right" evidence="11">
        <dbReference type="Rhea" id="RHEA:12461"/>
    </physiologicalReaction>
</comment>
<comment type="pathway">
    <text evidence="3">Carbohydrate metabolism; tricarboxylic acid cycle; (S)-malate from fumarate: step 1/1.</text>
</comment>
<comment type="subunit">
    <text evidence="2">Homotetramer. Interacts with H2AZ1.</text>
</comment>
<comment type="subcellular location">
    <molecule>Isoform Mitochondrial</molecule>
    <subcellularLocation>
        <location evidence="2">Mitochondrion</location>
    </subcellularLocation>
</comment>
<comment type="subcellular location">
    <molecule>Isoform Cytoplasmic</molecule>
    <subcellularLocation>
        <location evidence="2">Cytoplasm</location>
        <location evidence="2">Cytosol</location>
    </subcellularLocation>
    <subcellularLocation>
        <location evidence="2">Nucleus</location>
    </subcellularLocation>
    <subcellularLocation>
        <location evidence="2">Chromosome</location>
    </subcellularLocation>
    <text evidence="2">Translocates to the nucleus in response to DNA damage: localizes to DNA double-strand breaks (DSBs) following phosphorylation by PRKDC.</text>
</comment>
<comment type="alternative products">
    <event type="alternative initiation"/>
    <isoform>
        <id>P97807-1</id>
        <name>Mitochondrial</name>
        <sequence type="displayed"/>
    </isoform>
    <isoform>
        <id>P97807-2</id>
        <name>Cytoplasmic</name>
        <sequence type="described" ref="VSP_018967"/>
    </isoform>
</comment>
<comment type="PTM">
    <molecule>Isoform Cytoplasmic</molecule>
    <text evidence="2">Phosphorylation at Thr-233 by PRKDC in response to DNA damage promotes translocation to the nucleus and recruitment to DNA double-strand breaks (DSBs).</text>
</comment>
<comment type="disruption phenotype">
    <text evidence="5 6">Embryonic lethality (PubMed:17418408). Conditional deletion in the kidney leads to the development of renal cysts, reminiscent of hereditary leiomyomatosis and renal cell cancer (HLRCC) phenotype in human (PubMed:17418408). Renal cysts are caused by accumulation of fumarate that promotes the formation of non-enzymatic post-translational modification cysteine S-succination (S-(2-succinyl)cysteine) on proteins, such as Keap1 (PubMed:22014577).</text>
</comment>
<comment type="miscellaneous">
    <text evidence="1 4">There are 2 substrate-binding sites: the catalytic A site, and the non-catalytic B site that may play a role in the transfer of substrate or product between the active site and the solvent. Alternatively, the B site may bind allosteric effectors.</text>
</comment>
<comment type="similarity">
    <text evidence="10">Belongs to the class-II fumarase/aspartase family. Fumarase subfamily.</text>
</comment>
<keyword id="KW-0007">Acetylation</keyword>
<keyword id="KW-0024">Alternative initiation</keyword>
<keyword id="KW-0158">Chromosome</keyword>
<keyword id="KW-0963">Cytoplasm</keyword>
<keyword id="KW-0903">Direct protein sequencing</keyword>
<keyword id="KW-0227">DNA damage</keyword>
<keyword id="KW-0234">DNA repair</keyword>
<keyword id="KW-0456">Lyase</keyword>
<keyword id="KW-0496">Mitochondrion</keyword>
<keyword id="KW-0539">Nucleus</keyword>
<keyword id="KW-0597">Phosphoprotein</keyword>
<keyword id="KW-1185">Reference proteome</keyword>
<keyword id="KW-0809">Transit peptide</keyword>
<keyword id="KW-0816">Tricarboxylic acid cycle</keyword>